<keyword id="KW-0963">Cytoplasm</keyword>
<keyword id="KW-0413">Isomerase</keyword>
<keyword id="KW-1185">Reference proteome</keyword>
<keyword id="KW-0694">RNA-binding</keyword>
<keyword id="KW-0698">rRNA processing</keyword>
<comment type="function">
    <text evidence="2">Responsible for synthesis of pseudouridine from uracil at positions 1911, 1915 and 1917 in 23S ribosomal RNA.</text>
</comment>
<comment type="catalytic activity">
    <reaction evidence="2">
        <text>uridine(1911/1915/1917) in 23S rRNA = pseudouridine(1911/1915/1917) in 23S rRNA</text>
        <dbReference type="Rhea" id="RHEA:42524"/>
        <dbReference type="Rhea" id="RHEA-COMP:10097"/>
        <dbReference type="Rhea" id="RHEA-COMP:10098"/>
        <dbReference type="ChEBI" id="CHEBI:65314"/>
        <dbReference type="ChEBI" id="CHEBI:65315"/>
        <dbReference type="EC" id="5.4.99.23"/>
    </reaction>
</comment>
<comment type="subcellular location">
    <subcellularLocation>
        <location evidence="2">Cytoplasm</location>
    </subcellularLocation>
    <text evidence="2">Associates with late stage pre-50S ribosomal subunits.</text>
</comment>
<comment type="similarity">
    <text evidence="5">Belongs to the pseudouridine synthase RluA family.</text>
</comment>
<organism>
    <name type="scientific">Neisseria meningitidis serogroup B (strain ATCC BAA-335 / MC58)</name>
    <dbReference type="NCBI Taxonomy" id="122586"/>
    <lineage>
        <taxon>Bacteria</taxon>
        <taxon>Pseudomonadati</taxon>
        <taxon>Pseudomonadota</taxon>
        <taxon>Betaproteobacteria</taxon>
        <taxon>Neisseriales</taxon>
        <taxon>Neisseriaceae</taxon>
        <taxon>Neisseria</taxon>
    </lineage>
</organism>
<reference key="1">
    <citation type="journal article" date="2000" name="Science">
        <title>Complete genome sequence of Neisseria meningitidis serogroup B strain MC58.</title>
        <authorList>
            <person name="Tettelin H."/>
            <person name="Saunders N.J."/>
            <person name="Heidelberg J.F."/>
            <person name="Jeffries A.C."/>
            <person name="Nelson K.E."/>
            <person name="Eisen J.A."/>
            <person name="Ketchum K.A."/>
            <person name="Hood D.W."/>
            <person name="Peden J.F."/>
            <person name="Dodson R.J."/>
            <person name="Nelson W.C."/>
            <person name="Gwinn M.L."/>
            <person name="DeBoy R.T."/>
            <person name="Peterson J.D."/>
            <person name="Hickey E.K."/>
            <person name="Haft D.H."/>
            <person name="Salzberg S.L."/>
            <person name="White O."/>
            <person name="Fleischmann R.D."/>
            <person name="Dougherty B.A."/>
            <person name="Mason T.M."/>
            <person name="Ciecko A."/>
            <person name="Parksey D.S."/>
            <person name="Blair E."/>
            <person name="Cittone H."/>
            <person name="Clark E.B."/>
            <person name="Cotton M.D."/>
            <person name="Utterback T.R."/>
            <person name="Khouri H.M."/>
            <person name="Qin H."/>
            <person name="Vamathevan J.J."/>
            <person name="Gill J."/>
            <person name="Scarlato V."/>
            <person name="Masignani V."/>
            <person name="Pizza M."/>
            <person name="Grandi G."/>
            <person name="Sun L."/>
            <person name="Smith H.O."/>
            <person name="Fraser C.M."/>
            <person name="Moxon E.R."/>
            <person name="Rappuoli R."/>
            <person name="Venter J.C."/>
        </authorList>
    </citation>
    <scope>NUCLEOTIDE SEQUENCE [LARGE SCALE GENOMIC DNA]</scope>
    <source>
        <strain>ATCC BAA-335 / MC58</strain>
    </source>
</reference>
<name>RLUD_NEIMB</name>
<accession>Q9K0B0</accession>
<sequence>MQNTSFDNESDYSDDSDFASASETENRIGLTVPLELAGGRLDAVLAKLLPDYSRSRLTSWIKEGAVIVNDKPSQPKDKMIGGEQICVTVRPSEENLAFVPEPMALDIVYEDDTVIVVNKPAGLVVHPAAGNWTGTLLNGLLAHCPELSQVPRAGIVHRLDKETSGLMVVAKTLPAQNSLVRQLQERTVKRIYRAVANGIVPFDGKIETQIGRDPHNRLKMAVVKFGGKPAVTHVKVLERYLTHSYIECSLETGRTHQIRVHMREANHPLAADPVYGNPRHPCGDTVKEAVKSLGARQALHAYRLSFTHPESGETVSFEAPIPNDIYHLLSVLRLEAGLDSSLSNEEEWQDKFGADDDDDWNEDDYDVEVVYVRE</sequence>
<evidence type="ECO:0000250" key="1"/>
<evidence type="ECO:0000250" key="2">
    <source>
        <dbReference type="UniProtKB" id="P33643"/>
    </source>
</evidence>
<evidence type="ECO:0000255" key="3">
    <source>
        <dbReference type="PROSITE-ProRule" id="PRU00182"/>
    </source>
</evidence>
<evidence type="ECO:0000256" key="4">
    <source>
        <dbReference type="SAM" id="MobiDB-lite"/>
    </source>
</evidence>
<evidence type="ECO:0000305" key="5"/>
<proteinExistence type="inferred from homology"/>
<gene>
    <name type="primary">rluD</name>
    <name type="ordered locus">NMB0704</name>
</gene>
<protein>
    <recommendedName>
        <fullName evidence="2">Ribosomal large subunit pseudouridine synthase D</fullName>
        <ecNumber evidence="2">5.4.99.23</ecNumber>
    </recommendedName>
    <alternativeName>
        <fullName>23S rRNA pseudouridine(1911/1915/1917) synthase</fullName>
    </alternativeName>
    <alternativeName>
        <fullName>rRNA pseudouridylate synthase D</fullName>
    </alternativeName>
    <alternativeName>
        <fullName>rRNA-uridine isomerase D</fullName>
    </alternativeName>
</protein>
<dbReference type="EC" id="5.4.99.23" evidence="2"/>
<dbReference type="EMBL" id="AE002098">
    <property type="protein sequence ID" value="AAF41121.1"/>
    <property type="molecule type" value="Genomic_DNA"/>
</dbReference>
<dbReference type="PIR" id="A81168">
    <property type="entry name" value="A81168"/>
</dbReference>
<dbReference type="RefSeq" id="NP_273746.1">
    <property type="nucleotide sequence ID" value="NC_003112.2"/>
</dbReference>
<dbReference type="RefSeq" id="WP_002247551.1">
    <property type="nucleotide sequence ID" value="NC_003112.2"/>
</dbReference>
<dbReference type="SMR" id="Q9K0B0"/>
<dbReference type="FunCoup" id="Q9K0B0">
    <property type="interactions" value="544"/>
</dbReference>
<dbReference type="STRING" id="122586.NMB0704"/>
<dbReference type="PaxDb" id="122586-NMB0704"/>
<dbReference type="KEGG" id="nme:NMB0704"/>
<dbReference type="PATRIC" id="fig|122586.8.peg.896"/>
<dbReference type="HOGENOM" id="CLU_016902_4_0_4"/>
<dbReference type="InParanoid" id="Q9K0B0"/>
<dbReference type="OrthoDB" id="9785808at2"/>
<dbReference type="Proteomes" id="UP000000425">
    <property type="component" value="Chromosome"/>
</dbReference>
<dbReference type="GO" id="GO:0005737">
    <property type="term" value="C:cytoplasm"/>
    <property type="evidence" value="ECO:0007669"/>
    <property type="project" value="UniProtKB-SubCell"/>
</dbReference>
<dbReference type="GO" id="GO:0160140">
    <property type="term" value="F:23S rRNA pseudouridine(1911/1915/1917) synthase activity"/>
    <property type="evidence" value="ECO:0007669"/>
    <property type="project" value="UniProtKB-EC"/>
</dbReference>
<dbReference type="GO" id="GO:0009982">
    <property type="term" value="F:pseudouridine synthase activity"/>
    <property type="evidence" value="ECO:0000318"/>
    <property type="project" value="GO_Central"/>
</dbReference>
<dbReference type="GO" id="GO:0003723">
    <property type="term" value="F:RNA binding"/>
    <property type="evidence" value="ECO:0007669"/>
    <property type="project" value="UniProtKB-KW"/>
</dbReference>
<dbReference type="GO" id="GO:0000455">
    <property type="term" value="P:enzyme-directed rRNA pseudouridine synthesis"/>
    <property type="evidence" value="ECO:0000318"/>
    <property type="project" value="GO_Central"/>
</dbReference>
<dbReference type="CDD" id="cd02869">
    <property type="entry name" value="PseudoU_synth_RluA_like"/>
    <property type="match status" value="1"/>
</dbReference>
<dbReference type="CDD" id="cd00165">
    <property type="entry name" value="S4"/>
    <property type="match status" value="1"/>
</dbReference>
<dbReference type="FunFam" id="3.10.290.10:FF:000011">
    <property type="entry name" value="Pseudouridine synthase"/>
    <property type="match status" value="1"/>
</dbReference>
<dbReference type="FunFam" id="3.30.2350.10:FF:000006">
    <property type="entry name" value="Pseudouridine synthase"/>
    <property type="match status" value="1"/>
</dbReference>
<dbReference type="Gene3D" id="3.30.2350.10">
    <property type="entry name" value="Pseudouridine synthase"/>
    <property type="match status" value="1"/>
</dbReference>
<dbReference type="Gene3D" id="3.10.290.10">
    <property type="entry name" value="RNA-binding S4 domain"/>
    <property type="match status" value="1"/>
</dbReference>
<dbReference type="InterPro" id="IPR020103">
    <property type="entry name" value="PsdUridine_synth_cat_dom_sf"/>
</dbReference>
<dbReference type="InterPro" id="IPR006224">
    <property type="entry name" value="PsdUridine_synth_RluA-like_CS"/>
</dbReference>
<dbReference type="InterPro" id="IPR006225">
    <property type="entry name" value="PsdUridine_synth_RluC/D"/>
</dbReference>
<dbReference type="InterPro" id="IPR006145">
    <property type="entry name" value="PsdUridine_synth_RsuA/RluA"/>
</dbReference>
<dbReference type="InterPro" id="IPR050188">
    <property type="entry name" value="RluA_PseudoU_synthase"/>
</dbReference>
<dbReference type="InterPro" id="IPR002942">
    <property type="entry name" value="S4_RNA-bd"/>
</dbReference>
<dbReference type="InterPro" id="IPR036986">
    <property type="entry name" value="S4_RNA-bd_sf"/>
</dbReference>
<dbReference type="NCBIfam" id="NF008385">
    <property type="entry name" value="PRK11180.1"/>
    <property type="match status" value="1"/>
</dbReference>
<dbReference type="NCBIfam" id="TIGR00005">
    <property type="entry name" value="rluA_subfam"/>
    <property type="match status" value="1"/>
</dbReference>
<dbReference type="PANTHER" id="PTHR21600">
    <property type="entry name" value="MITOCHONDRIAL RNA PSEUDOURIDINE SYNTHASE"/>
    <property type="match status" value="1"/>
</dbReference>
<dbReference type="PANTHER" id="PTHR21600:SF44">
    <property type="entry name" value="RIBOSOMAL LARGE SUBUNIT PSEUDOURIDINE SYNTHASE D"/>
    <property type="match status" value="1"/>
</dbReference>
<dbReference type="Pfam" id="PF00849">
    <property type="entry name" value="PseudoU_synth_2"/>
    <property type="match status" value="1"/>
</dbReference>
<dbReference type="Pfam" id="PF01479">
    <property type="entry name" value="S4"/>
    <property type="match status" value="1"/>
</dbReference>
<dbReference type="SMART" id="SM00363">
    <property type="entry name" value="S4"/>
    <property type="match status" value="1"/>
</dbReference>
<dbReference type="SUPFAM" id="SSF55174">
    <property type="entry name" value="Alpha-L RNA-binding motif"/>
    <property type="match status" value="1"/>
</dbReference>
<dbReference type="SUPFAM" id="SSF55120">
    <property type="entry name" value="Pseudouridine synthase"/>
    <property type="match status" value="1"/>
</dbReference>
<dbReference type="PROSITE" id="PS01129">
    <property type="entry name" value="PSI_RLU"/>
    <property type="match status" value="1"/>
</dbReference>
<dbReference type="PROSITE" id="PS50889">
    <property type="entry name" value="S4"/>
    <property type="match status" value="1"/>
</dbReference>
<feature type="chain" id="PRO_0000162694" description="Ribosomal large subunit pseudouridine synthase D">
    <location>
        <begin position="1"/>
        <end position="374"/>
    </location>
</feature>
<feature type="domain" description="S4 RNA-binding" evidence="3">
    <location>
        <begin position="39"/>
        <end position="112"/>
    </location>
</feature>
<feature type="region of interest" description="Disordered" evidence="4">
    <location>
        <begin position="1"/>
        <end position="20"/>
    </location>
</feature>
<feature type="compositionally biased region" description="Acidic residues" evidence="4">
    <location>
        <begin position="8"/>
        <end position="17"/>
    </location>
</feature>
<feature type="active site" evidence="1">
    <location>
        <position position="160"/>
    </location>
</feature>